<comment type="function">
    <text evidence="1 5 7 8 10">Probable protease subunit of the COP9 signalosome complex (CSN), a complex involved in various cellular and developmental processes such as photomorphogenesis and auxin and jasmonate responses. The CSN complex is an essential regulator of the ubiquitin (Ubl) conjugation pathway by mediating the deneddylation of the cullin subunits of the SCF-type E3 ligase complexes, leading to decrease the Ubl ligase activity of SCF. In the complex, it probably acts as the catalytic center that mediates the cleavage of Nedd8 from cullins. It however has no metalloprotease activity by itself and requires the other subunits of the CSN complex (By similarity). The CSN complex is involved in repression of photomorphogenesis in darkness by regulating the activity of COP1-containing Ubl ligase complexes. The complex is also required for degradation of PSIAA6 by regulating the activity of the Ubl ligase SCF-TIR complex. Not involved in CSN's deneddylation/derubylation activity (PubMed:15486099, PubMed:17307927). Essential for the structural integrity of the CSN holocomplex (PubMed:17307927).</text>
</comment>
<comment type="cofactor">
    <cofactor evidence="1">
        <name>a divalent metal cation</name>
        <dbReference type="ChEBI" id="CHEBI:60240"/>
    </cofactor>
</comment>
<comment type="subunit">
    <text evidence="6 7 9 10 11">Component of the CSN complex, probably composed of CSN1, CSN2, CSN3, CSN4, CSN5 (CSN5A or CSN5B), CSN6 (CSN6A or CSN6B), CSN7 and CSN8 (PubMed:12615944, PubMed:15486099, PubMed:9811788). CSN5A or CSN5B are present within distinct CSN complexes each containing only one copy of CSN5 (PubMed:15486099). Interacts with itself (PubMed:9811788). In the complex, it is located in the center and probably interacts directly with CSN4 and CSN6A or CSN6B (PubMed:12615944, PubMed:9811788). Also exists as monomeric form (PubMed:9811788). Interacts with CYT1 in vitro and in planta (PubMed:23424245). Interacts with FLZ3 (Ref.11).</text>
</comment>
<comment type="interaction">
    <interactant intactId="EBI-697501">
        <id>Q9FVU9</id>
    </interactant>
    <interactant intactId="EBI-25512974">
        <id>Q9ZT84</id>
        <label>GA3OX2</label>
    </interactant>
    <organismsDiffer>false</organismsDiffer>
    <experiments>3</experiments>
</comment>
<comment type="interaction">
    <interactant intactId="EBI-697501">
        <id>Q9FVU9</id>
    </interactant>
    <interactant intactId="EBI-963686">
        <id>Q9LYC1</id>
        <label>GID1B</label>
    </interactant>
    <organismsDiffer>false</organismsDiffer>
    <experiments>3</experiments>
</comment>
<comment type="interaction">
    <interactant intactId="EBI-697501">
        <id>Q9FVU9</id>
    </interactant>
    <interactant intactId="EBI-4444060">
        <id>O82255</id>
        <label>GRXC13</label>
    </interactant>
    <organismsDiffer>false</organismsDiffer>
    <experiments>3</experiments>
</comment>
<comment type="interaction">
    <interactant intactId="EBI-697501">
        <id>Q9FVU9</id>
    </interactant>
    <interactant intactId="EBI-632243">
        <id>P93830</id>
        <label>IAA17</label>
    </interactant>
    <organismsDiffer>false</organismsDiffer>
    <experiments>3</experiments>
</comment>
<comment type="interaction">
    <interactant intactId="EBI-697501">
        <id>Q9FVU9</id>
    </interactant>
    <interactant intactId="EBI-2356712">
        <id>Q9SZ67</id>
        <label>WRKY19</label>
    </interactant>
    <organismsDiffer>false</organismsDiffer>
    <experiments>3</experiments>
</comment>
<comment type="subcellular location">
    <subcellularLocation>
        <location evidence="10">Cytoplasm</location>
    </subcellularLocation>
    <subcellularLocation>
        <location evidence="10">Nucleus</location>
    </subcellularLocation>
</comment>
<comment type="tissue specificity">
    <text evidence="10">Ubiquitously expressed. Highly expressed in flowers and roots. Expressed at lower level in seedlings and siliques.</text>
</comment>
<comment type="domain">
    <text evidence="1">The JAMM motif is essential for the protease activity of the CSN complex resulting in deneddylation of cullins. It constitutes the catalytic center of the complex (By similarity).</text>
</comment>
<comment type="disruption phenotype">
    <text evidence="7 8">No visible phenotype and no effect on the derubylation of CUL1 (PubMed:15486099, PubMed:17307927). Csn5a and csn5b double mutants are lethal at the seedling stage (PubMed:17307927).</text>
</comment>
<comment type="similarity">
    <text evidence="15">Belongs to the peptidase M67A family. CSN5 subfamily.</text>
</comment>
<keyword id="KW-0007">Acetylation</keyword>
<keyword id="KW-0963">Cytoplasm</keyword>
<keyword id="KW-0217">Developmental protein</keyword>
<keyword id="KW-0378">Hydrolase</keyword>
<keyword id="KW-0479">Metal-binding</keyword>
<keyword id="KW-0482">Metalloprotease</keyword>
<keyword id="KW-0539">Nucleus</keyword>
<keyword id="KW-0607">Phytochrome signaling pathway</keyword>
<keyword id="KW-0645">Protease</keyword>
<keyword id="KW-1185">Reference proteome</keyword>
<keyword id="KW-0736">Signalosome</keyword>
<keyword id="KW-0862">Zinc</keyword>
<reference key="1">
    <citation type="journal article" date="1998" name="Plant Cell">
        <title>Arabidopsis homologs of a c-Jun coactivator are present both in monomeric form and in the COP9 complex, and their abundance is differentially affected by the pleiotropic cop/det/fus mutations.</title>
        <authorList>
            <person name="Kwok S.F."/>
            <person name="Solano R."/>
            <person name="Tsuge T."/>
            <person name="Chamovitz D.A."/>
            <person name="Ecker J.R."/>
            <person name="Matsui M."/>
            <person name="Deng X.-W."/>
        </authorList>
    </citation>
    <scope>NUCLEOTIDE SEQUENCE [MRNA]</scope>
    <scope>FUNCTION</scope>
    <scope>SUBCELLULAR LOCATION</scope>
    <scope>TISSUE SPECIFICITY</scope>
    <scope>SUBUNIT</scope>
    <source>
        <tissue>Seedling</tissue>
    </source>
</reference>
<reference key="2">
    <citation type="journal article" date="2001" name="EMBO J.">
        <title>Subunit interaction maps for the regulatory particle of the 26S proteasome and the COP9 signalosome.</title>
        <authorList>
            <person name="Fu H."/>
            <person name="Reis N."/>
            <person name="Lee Y."/>
            <person name="Glickman M.H."/>
            <person name="Vierstra R."/>
        </authorList>
    </citation>
    <scope>NUCLEOTIDE SEQUENCE [MRNA]</scope>
    <source>
        <strain>cv. Columbia</strain>
    </source>
</reference>
<reference key="3">
    <citation type="journal article" date="2000" name="Nature">
        <title>Sequence and analysis of chromosome 1 of the plant Arabidopsis thaliana.</title>
        <authorList>
            <person name="Theologis A."/>
            <person name="Ecker J.R."/>
            <person name="Palm C.J."/>
            <person name="Federspiel N.A."/>
            <person name="Kaul S."/>
            <person name="White O."/>
            <person name="Alonso J."/>
            <person name="Altafi H."/>
            <person name="Araujo R."/>
            <person name="Bowman C.L."/>
            <person name="Brooks S.Y."/>
            <person name="Buehler E."/>
            <person name="Chan A."/>
            <person name="Chao Q."/>
            <person name="Chen H."/>
            <person name="Cheuk R.F."/>
            <person name="Chin C.W."/>
            <person name="Chung M.K."/>
            <person name="Conn L."/>
            <person name="Conway A.B."/>
            <person name="Conway A.R."/>
            <person name="Creasy T.H."/>
            <person name="Dewar K."/>
            <person name="Dunn P."/>
            <person name="Etgu P."/>
            <person name="Feldblyum T.V."/>
            <person name="Feng J.-D."/>
            <person name="Fong B."/>
            <person name="Fujii C.Y."/>
            <person name="Gill J.E."/>
            <person name="Goldsmith A.D."/>
            <person name="Haas B."/>
            <person name="Hansen N.F."/>
            <person name="Hughes B."/>
            <person name="Huizar L."/>
            <person name="Hunter J.L."/>
            <person name="Jenkins J."/>
            <person name="Johnson-Hopson C."/>
            <person name="Khan S."/>
            <person name="Khaykin E."/>
            <person name="Kim C.J."/>
            <person name="Koo H.L."/>
            <person name="Kremenetskaia I."/>
            <person name="Kurtz D.B."/>
            <person name="Kwan A."/>
            <person name="Lam B."/>
            <person name="Langin-Hooper S."/>
            <person name="Lee A."/>
            <person name="Lee J.M."/>
            <person name="Lenz C.A."/>
            <person name="Li J.H."/>
            <person name="Li Y.-P."/>
            <person name="Lin X."/>
            <person name="Liu S.X."/>
            <person name="Liu Z.A."/>
            <person name="Luros J.S."/>
            <person name="Maiti R."/>
            <person name="Marziali A."/>
            <person name="Militscher J."/>
            <person name="Miranda M."/>
            <person name="Nguyen M."/>
            <person name="Nierman W.C."/>
            <person name="Osborne B.I."/>
            <person name="Pai G."/>
            <person name="Peterson J."/>
            <person name="Pham P.K."/>
            <person name="Rizzo M."/>
            <person name="Rooney T."/>
            <person name="Rowley D."/>
            <person name="Sakano H."/>
            <person name="Salzberg S.L."/>
            <person name="Schwartz J.R."/>
            <person name="Shinn P."/>
            <person name="Southwick A.M."/>
            <person name="Sun H."/>
            <person name="Tallon L.J."/>
            <person name="Tambunga G."/>
            <person name="Toriumi M.J."/>
            <person name="Town C.D."/>
            <person name="Utterback T."/>
            <person name="Van Aken S."/>
            <person name="Vaysberg M."/>
            <person name="Vysotskaia V.S."/>
            <person name="Walker M."/>
            <person name="Wu D."/>
            <person name="Yu G."/>
            <person name="Fraser C.M."/>
            <person name="Venter J.C."/>
            <person name="Davis R.W."/>
        </authorList>
    </citation>
    <scope>NUCLEOTIDE SEQUENCE [LARGE SCALE GENOMIC DNA]</scope>
    <source>
        <strain>cv. Columbia</strain>
    </source>
</reference>
<reference key="4">
    <citation type="journal article" date="2017" name="Plant J.">
        <title>Araport11: a complete reannotation of the Arabidopsis thaliana reference genome.</title>
        <authorList>
            <person name="Cheng C.Y."/>
            <person name="Krishnakumar V."/>
            <person name="Chan A.P."/>
            <person name="Thibaud-Nissen F."/>
            <person name="Schobel S."/>
            <person name="Town C.D."/>
        </authorList>
    </citation>
    <scope>GENOME REANNOTATION</scope>
    <source>
        <strain>cv. Columbia</strain>
    </source>
</reference>
<reference key="5">
    <citation type="journal article" date="2003" name="Science">
        <title>Empirical analysis of transcriptional activity in the Arabidopsis genome.</title>
        <authorList>
            <person name="Yamada K."/>
            <person name="Lim J."/>
            <person name="Dale J.M."/>
            <person name="Chen H."/>
            <person name="Shinn P."/>
            <person name="Palm C.J."/>
            <person name="Southwick A.M."/>
            <person name="Wu H.C."/>
            <person name="Kim C.J."/>
            <person name="Nguyen M."/>
            <person name="Pham P.K."/>
            <person name="Cheuk R.F."/>
            <person name="Karlin-Newmann G."/>
            <person name="Liu S.X."/>
            <person name="Lam B."/>
            <person name="Sakano H."/>
            <person name="Wu T."/>
            <person name="Yu G."/>
            <person name="Miranda M."/>
            <person name="Quach H.L."/>
            <person name="Tripp M."/>
            <person name="Chang C.H."/>
            <person name="Lee J.M."/>
            <person name="Toriumi M.J."/>
            <person name="Chan M.M."/>
            <person name="Tang C.C."/>
            <person name="Onodera C.S."/>
            <person name="Deng J.M."/>
            <person name="Akiyama K."/>
            <person name="Ansari Y."/>
            <person name="Arakawa T."/>
            <person name="Banh J."/>
            <person name="Banno F."/>
            <person name="Bowser L."/>
            <person name="Brooks S.Y."/>
            <person name="Carninci P."/>
            <person name="Chao Q."/>
            <person name="Choy N."/>
            <person name="Enju A."/>
            <person name="Goldsmith A.D."/>
            <person name="Gurjal M."/>
            <person name="Hansen N.F."/>
            <person name="Hayashizaki Y."/>
            <person name="Johnson-Hopson C."/>
            <person name="Hsuan V.W."/>
            <person name="Iida K."/>
            <person name="Karnes M."/>
            <person name="Khan S."/>
            <person name="Koesema E."/>
            <person name="Ishida J."/>
            <person name="Jiang P.X."/>
            <person name="Jones T."/>
            <person name="Kawai J."/>
            <person name="Kamiya A."/>
            <person name="Meyers C."/>
            <person name="Nakajima M."/>
            <person name="Narusaka M."/>
            <person name="Seki M."/>
            <person name="Sakurai T."/>
            <person name="Satou M."/>
            <person name="Tamse R."/>
            <person name="Vaysberg M."/>
            <person name="Wallender E.K."/>
            <person name="Wong C."/>
            <person name="Yamamura Y."/>
            <person name="Yuan S."/>
            <person name="Shinozaki K."/>
            <person name="Davis R.W."/>
            <person name="Theologis A."/>
            <person name="Ecker J.R."/>
        </authorList>
    </citation>
    <scope>NUCLEOTIDE SEQUENCE [LARGE SCALE MRNA]</scope>
    <source>
        <strain>cv. Columbia</strain>
    </source>
</reference>
<reference key="6">
    <citation type="journal article" date="2001" name="Science">
        <title>Interactions of the COP9 signalosome with the E3 ubiquitin ligase SCF(TIR1) in mediating auxin response.</title>
        <authorList>
            <person name="Schwechheimer C."/>
            <person name="Serino G."/>
            <person name="Callis J."/>
            <person name="Crosby W.L."/>
            <person name="Lyapina S."/>
            <person name="Deshaies R.J."/>
            <person name="Gray W.M."/>
            <person name="Estelle M."/>
            <person name="Deng X.-W."/>
        </authorList>
    </citation>
    <scope>FUNCTION</scope>
</reference>
<reference key="7">
    <citation type="journal article" date="2003" name="Plant Cell">
        <title>Characterization of the last subunit of the Arabidopsis COP9 signalosome: implications for the overall structure and origin of the complex.</title>
        <authorList>
            <person name="Serino G."/>
            <person name="Su H."/>
            <person name="Peng Z."/>
            <person name="Tsuge T."/>
            <person name="Wei N."/>
            <person name="Gu H."/>
            <person name="Deng X.-W."/>
        </authorList>
    </citation>
    <scope>INTERACTION WITH CSN4 AND CSN6</scope>
</reference>
<reference key="8">
    <citation type="journal article" date="2004" name="Plant Cell">
        <title>The Arabidopsis CSN5A and CSN5B subunits are present in distinct COP9 signalosome complexes, and mutations in their JAMM domains exhibit differential dominant negative effects on development.</title>
        <authorList>
            <person name="Gusmaroli G."/>
            <person name="Feng S."/>
            <person name="Deng X.W."/>
        </authorList>
    </citation>
    <scope>FUNCTION</scope>
    <scope>DISRUPTION PHENOTYPE</scope>
    <scope>SUBUNIT</scope>
    <scope>MUTAGENESIS OF HIS-142; HIS-144; CYS-149; ASP-155 AND ASP-175</scope>
</reference>
<reference key="9">
    <citation type="journal article" date="2007" name="Plant Cell">
        <title>Role of the MPN subunits in COP9 signalosome assembly and activity, and their regulatory interaction with Arabidopsis Cullin3-based E3 ligases.</title>
        <authorList>
            <person name="Gusmaroli G."/>
            <person name="Figueroa P."/>
            <person name="Serino G."/>
            <person name="Deng X.W."/>
        </authorList>
    </citation>
    <scope>FUNCTION</scope>
    <scope>DISRUPTION PHENOTYPE</scope>
</reference>
<reference key="10">
    <citation type="journal article" date="2013" name="Plant Cell">
        <title>Arabidopsis CSN5B interacts with VTC1 and modulates ascorbic acid synthesis.</title>
        <authorList>
            <person name="Wang J."/>
            <person name="Yu Y."/>
            <person name="Zhang Z."/>
            <person name="Quan R."/>
            <person name="Zhang H."/>
            <person name="Ma L."/>
            <person name="Deng X.W."/>
            <person name="Huang R."/>
        </authorList>
    </citation>
    <scope>INTERACTION WITH CYT1</scope>
</reference>
<reference key="11">
    <citation type="journal article" date="2016" name="Curr. Plant Biol.">
        <title>A protein-protein interaction network linking the energy-sensor kinase SnRK1 to multiple signaling pathways in Arabidopsis thaliana.</title>
        <authorList>
            <person name="Nietzsche M."/>
            <person name="Landgraf R."/>
            <person name="Tohge T."/>
            <person name="Boernke F."/>
        </authorList>
    </citation>
    <scope>INTERACTION WITH FLZ3</scope>
</reference>
<protein>
    <recommendedName>
        <fullName>COP9 signalosome complex subunit 5b</fullName>
        <shortName>Signalosome subunit 5b</shortName>
        <ecNumber>3.4.-.-</ecNumber>
    </recommendedName>
    <alternativeName>
        <fullName>Jun activation domain-binding homolog 2</fullName>
    </alternativeName>
</protein>
<name>CSN5B_ARATH</name>
<evidence type="ECO:0000250" key="1"/>
<evidence type="ECO:0000250" key="2">
    <source>
        <dbReference type="UniProtKB" id="Q8LAZ7"/>
    </source>
</evidence>
<evidence type="ECO:0000255" key="3">
    <source>
        <dbReference type="PROSITE-ProRule" id="PRU01182"/>
    </source>
</evidence>
<evidence type="ECO:0000256" key="4">
    <source>
        <dbReference type="SAM" id="MobiDB-lite"/>
    </source>
</evidence>
<evidence type="ECO:0000269" key="5">
    <source>
    </source>
</evidence>
<evidence type="ECO:0000269" key="6">
    <source>
    </source>
</evidence>
<evidence type="ECO:0000269" key="7">
    <source>
    </source>
</evidence>
<evidence type="ECO:0000269" key="8">
    <source>
    </source>
</evidence>
<evidence type="ECO:0000269" key="9">
    <source>
    </source>
</evidence>
<evidence type="ECO:0000269" key="10">
    <source>
    </source>
</evidence>
<evidence type="ECO:0000269" key="11">
    <source ref="11"/>
</evidence>
<evidence type="ECO:0000303" key="12">
    <source>
    </source>
</evidence>
<evidence type="ECO:0000303" key="13">
    <source>
    </source>
</evidence>
<evidence type="ECO:0000303" key="14">
    <source>
    </source>
</evidence>
<evidence type="ECO:0000305" key="15"/>
<evidence type="ECO:0000312" key="16">
    <source>
        <dbReference type="Araport" id="AT1G71230"/>
    </source>
</evidence>
<evidence type="ECO:0000312" key="17">
    <source>
        <dbReference type="EMBL" id="AAG51882.1"/>
    </source>
</evidence>
<gene>
    <name evidence="13" type="primary">CSN5B</name>
    <name evidence="14" type="synonym">AJH2</name>
    <name evidence="12" type="synonym">CSN5A</name>
    <name evidence="16" type="ordered locus">At1g71230</name>
    <name evidence="17" type="ORF">F3I17.12</name>
</gene>
<proteinExistence type="evidence at protein level"/>
<sequence>MEGSSSTIARKTWELENSILTVDSPDSTSDNIFYYDDTSQTRFQQEKPWENDPHYFKRVKISALALLKMVVHARSGGTIEIMGLMQGKTDGDTIIVMDAFALPVEGTETRVNAQDDAYEYMVEYSQTNKLAGRLENVVGWYHSHPGYGCWLSGIDVSTQRLNQQHQEPFLAVVIDPTRTVSAGKVEIGAFRTYSKGYKPPDEPVSEYQTIPLNKIEDFGVHCKQYYSLDVTYFKSSLDSHLLDLLWNKYWVNTLSSSPLLGNGDYVAGQISDLAEKLEQAESHLVQSRFGGVVPSSLHKKKEDESQLTKITRDSAKITVEQVHGLMSQVIKDELFNSMRQSNNKSPTDSSDPDPMITY</sequence>
<accession>Q9FVU9</accession>
<accession>O82523</accession>
<organism>
    <name type="scientific">Arabidopsis thaliana</name>
    <name type="common">Mouse-ear cress</name>
    <dbReference type="NCBI Taxonomy" id="3702"/>
    <lineage>
        <taxon>Eukaryota</taxon>
        <taxon>Viridiplantae</taxon>
        <taxon>Streptophyta</taxon>
        <taxon>Embryophyta</taxon>
        <taxon>Tracheophyta</taxon>
        <taxon>Spermatophyta</taxon>
        <taxon>Magnoliopsida</taxon>
        <taxon>eudicotyledons</taxon>
        <taxon>Gunneridae</taxon>
        <taxon>Pentapetalae</taxon>
        <taxon>rosids</taxon>
        <taxon>malvids</taxon>
        <taxon>Brassicales</taxon>
        <taxon>Brassicaceae</taxon>
        <taxon>Camelineae</taxon>
        <taxon>Arabidopsis</taxon>
    </lineage>
</organism>
<dbReference type="EC" id="3.4.-.-"/>
<dbReference type="EMBL" id="AF087412">
    <property type="protein sequence ID" value="AAC36343.1"/>
    <property type="molecule type" value="mRNA"/>
</dbReference>
<dbReference type="EMBL" id="AF395061">
    <property type="protein sequence ID" value="AAL58104.1"/>
    <property type="molecule type" value="mRNA"/>
</dbReference>
<dbReference type="EMBL" id="AC016162">
    <property type="protein sequence ID" value="AAG51882.1"/>
    <property type="molecule type" value="Genomic_DNA"/>
</dbReference>
<dbReference type="EMBL" id="CP002684">
    <property type="protein sequence ID" value="AEE35176.1"/>
    <property type="molecule type" value="Genomic_DNA"/>
</dbReference>
<dbReference type="EMBL" id="AF411778">
    <property type="protein sequence ID" value="AAL06468.1"/>
    <property type="molecule type" value="mRNA"/>
</dbReference>
<dbReference type="EMBL" id="AY124816">
    <property type="protein sequence ID" value="AAM70525.1"/>
    <property type="molecule type" value="mRNA"/>
</dbReference>
<dbReference type="PIR" id="H96736">
    <property type="entry name" value="H96736"/>
</dbReference>
<dbReference type="PIR" id="T52042">
    <property type="entry name" value="T52042"/>
</dbReference>
<dbReference type="RefSeq" id="NP_177279.1">
    <property type="nucleotide sequence ID" value="NM_105792.2"/>
</dbReference>
<dbReference type="SMR" id="Q9FVU9"/>
<dbReference type="BioGRID" id="28683">
    <property type="interactions" value="48"/>
</dbReference>
<dbReference type="FunCoup" id="Q9FVU9">
    <property type="interactions" value="4436"/>
</dbReference>
<dbReference type="IntAct" id="Q9FVU9">
    <property type="interactions" value="64"/>
</dbReference>
<dbReference type="STRING" id="3702.Q9FVU9"/>
<dbReference type="MEROPS" id="M67.A02"/>
<dbReference type="PaxDb" id="3702-AT1G71230.1"/>
<dbReference type="ProteomicsDB" id="222703"/>
<dbReference type="EnsemblPlants" id="AT1G71230.1">
    <property type="protein sequence ID" value="AT1G71230.1"/>
    <property type="gene ID" value="AT1G71230"/>
</dbReference>
<dbReference type="GeneID" id="843463"/>
<dbReference type="Gramene" id="AT1G71230.1">
    <property type="protein sequence ID" value="AT1G71230.1"/>
    <property type="gene ID" value="AT1G71230"/>
</dbReference>
<dbReference type="KEGG" id="ath:AT1G71230"/>
<dbReference type="Araport" id="AT1G71230"/>
<dbReference type="TAIR" id="AT1G71230">
    <property type="gene designation" value="CSN5B"/>
</dbReference>
<dbReference type="eggNOG" id="KOG1554">
    <property type="taxonomic scope" value="Eukaryota"/>
</dbReference>
<dbReference type="HOGENOM" id="CLU_053034_0_2_1"/>
<dbReference type="InParanoid" id="Q9FVU9"/>
<dbReference type="OMA" id="VEQNEMR"/>
<dbReference type="PhylomeDB" id="Q9FVU9"/>
<dbReference type="PRO" id="PR:Q9FVU9"/>
<dbReference type="Proteomes" id="UP000006548">
    <property type="component" value="Chromosome 1"/>
</dbReference>
<dbReference type="ExpressionAtlas" id="Q9FVU9">
    <property type="expression patterns" value="baseline and differential"/>
</dbReference>
<dbReference type="GO" id="GO:0008180">
    <property type="term" value="C:COP9 signalosome"/>
    <property type="evidence" value="ECO:0007669"/>
    <property type="project" value="UniProtKB-KW"/>
</dbReference>
<dbReference type="GO" id="GO:0005737">
    <property type="term" value="C:cytoplasm"/>
    <property type="evidence" value="ECO:0007669"/>
    <property type="project" value="UniProtKB-SubCell"/>
</dbReference>
<dbReference type="GO" id="GO:0046872">
    <property type="term" value="F:metal ion binding"/>
    <property type="evidence" value="ECO:0007669"/>
    <property type="project" value="UniProtKB-KW"/>
</dbReference>
<dbReference type="GO" id="GO:0008237">
    <property type="term" value="F:metallopeptidase activity"/>
    <property type="evidence" value="ECO:0007669"/>
    <property type="project" value="UniProtKB-KW"/>
</dbReference>
<dbReference type="GO" id="GO:0010387">
    <property type="term" value="P:COP9 signalosome assembly"/>
    <property type="evidence" value="ECO:0000315"/>
    <property type="project" value="TAIR"/>
</dbReference>
<dbReference type="GO" id="GO:0010100">
    <property type="term" value="P:negative regulation of photomorphogenesis"/>
    <property type="evidence" value="ECO:0000316"/>
    <property type="project" value="TAIR"/>
</dbReference>
<dbReference type="GO" id="GO:0010971">
    <property type="term" value="P:positive regulation of G2/M transition of mitotic cell cycle"/>
    <property type="evidence" value="ECO:0000315"/>
    <property type="project" value="TAIR"/>
</dbReference>
<dbReference type="GO" id="GO:0045732">
    <property type="term" value="P:positive regulation of protein catabolic process"/>
    <property type="evidence" value="ECO:0000315"/>
    <property type="project" value="TAIR"/>
</dbReference>
<dbReference type="GO" id="GO:0000338">
    <property type="term" value="P:protein deneddylation"/>
    <property type="evidence" value="ECO:0000316"/>
    <property type="project" value="TAIR"/>
</dbReference>
<dbReference type="GO" id="GO:0006508">
    <property type="term" value="P:proteolysis"/>
    <property type="evidence" value="ECO:0007669"/>
    <property type="project" value="UniProtKB-KW"/>
</dbReference>
<dbReference type="GO" id="GO:0009585">
    <property type="term" value="P:red, far-red light phototransduction"/>
    <property type="evidence" value="ECO:0007669"/>
    <property type="project" value="UniProtKB-KW"/>
</dbReference>
<dbReference type="GO" id="GO:2000082">
    <property type="term" value="P:regulation of L-ascorbic acid biosynthetic process"/>
    <property type="evidence" value="ECO:0000315"/>
    <property type="project" value="TAIR"/>
</dbReference>
<dbReference type="GO" id="GO:0009733">
    <property type="term" value="P:response to auxin"/>
    <property type="evidence" value="ECO:0000316"/>
    <property type="project" value="TAIR"/>
</dbReference>
<dbReference type="CDD" id="cd08069">
    <property type="entry name" value="MPN_RPN11_CSN5"/>
    <property type="match status" value="1"/>
</dbReference>
<dbReference type="FunFam" id="3.40.140.10:FF:000003">
    <property type="entry name" value="COP9 signalosome complex subunit 5"/>
    <property type="match status" value="1"/>
</dbReference>
<dbReference type="Gene3D" id="3.40.140.10">
    <property type="entry name" value="Cytidine Deaminase, domain 2"/>
    <property type="match status" value="1"/>
</dbReference>
<dbReference type="InterPro" id="IPR040961">
    <property type="entry name" value="CSN5_C"/>
</dbReference>
<dbReference type="InterPro" id="IPR000555">
    <property type="entry name" value="JAMM/MPN+_dom"/>
</dbReference>
<dbReference type="InterPro" id="IPR050242">
    <property type="entry name" value="JAMM_MPN+_peptidase_M67A"/>
</dbReference>
<dbReference type="InterPro" id="IPR037518">
    <property type="entry name" value="MPN"/>
</dbReference>
<dbReference type="PANTHER" id="PTHR10410">
    <property type="entry name" value="EUKARYOTIC TRANSLATION INITIATION FACTOR 3 -RELATED"/>
    <property type="match status" value="1"/>
</dbReference>
<dbReference type="Pfam" id="PF18323">
    <property type="entry name" value="CSN5_C"/>
    <property type="match status" value="1"/>
</dbReference>
<dbReference type="Pfam" id="PF01398">
    <property type="entry name" value="JAB"/>
    <property type="match status" value="1"/>
</dbReference>
<dbReference type="SMART" id="SM00232">
    <property type="entry name" value="JAB_MPN"/>
    <property type="match status" value="1"/>
</dbReference>
<dbReference type="SUPFAM" id="SSF102712">
    <property type="entry name" value="JAB1/MPN domain"/>
    <property type="match status" value="1"/>
</dbReference>
<dbReference type="PROSITE" id="PS50249">
    <property type="entry name" value="MPN"/>
    <property type="match status" value="1"/>
</dbReference>
<feature type="chain" id="PRO_0000194842" description="COP9 signalosome complex subunit 5b">
    <location>
        <begin position="1"/>
        <end position="358"/>
    </location>
</feature>
<feature type="domain" description="MPN" evidence="3">
    <location>
        <begin position="59"/>
        <end position="196"/>
    </location>
</feature>
<feature type="region of interest" description="Disordered" evidence="4">
    <location>
        <begin position="338"/>
        <end position="358"/>
    </location>
</feature>
<feature type="short sequence motif" description="JAMM motif" evidence="3">
    <location>
        <begin position="142"/>
        <end position="155"/>
    </location>
</feature>
<feature type="compositionally biased region" description="Polar residues" evidence="4">
    <location>
        <begin position="338"/>
        <end position="349"/>
    </location>
</feature>
<feature type="binding site" evidence="3">
    <location>
        <position position="142"/>
    </location>
    <ligand>
        <name>Zn(2+)</name>
        <dbReference type="ChEBI" id="CHEBI:29105"/>
        <note>catalytic</note>
    </ligand>
</feature>
<feature type="binding site" evidence="3">
    <location>
        <position position="144"/>
    </location>
    <ligand>
        <name>Zn(2+)</name>
        <dbReference type="ChEBI" id="CHEBI:29105"/>
        <note>catalytic</note>
    </ligand>
</feature>
<feature type="binding site" evidence="3">
    <location>
        <position position="155"/>
    </location>
    <ligand>
        <name>Zn(2+)</name>
        <dbReference type="ChEBI" id="CHEBI:29105"/>
        <note>catalytic</note>
    </ligand>
</feature>
<feature type="modified residue" description="N-acetylmethionine" evidence="2">
    <location>
        <position position="1"/>
    </location>
</feature>
<feature type="mutagenesis site" description="No effect on CSN complex integrity and no effect on CUL1 derubylation." evidence="7">
    <original>H</original>
    <variation>A</variation>
    <location>
        <position position="142"/>
    </location>
</feature>
<feature type="mutagenesis site" description="No effect on CSN complex integrity and no effect on CUL1 derubylation." evidence="7">
    <original>H</original>
    <variation>A</variation>
    <location>
        <position position="144"/>
    </location>
</feature>
<feature type="mutagenesis site" description="No effect on CSN complex integrity and no effect on CUL1 derubylation." evidence="7">
    <original>C</original>
    <variation>A</variation>
    <location>
        <position position="149"/>
    </location>
</feature>
<feature type="mutagenesis site" description="No effect on CSN complex integrity and no effect on CUL1 derubylation." evidence="7">
    <original>D</original>
    <variation>N</variation>
    <location>
        <position position="155"/>
    </location>
</feature>
<feature type="mutagenesis site" description="No effect on CSN complex integrity and no effect on CUL1 derubylation." evidence="7">
    <original>D</original>
    <variation>E</variation>
    <variation>N</variation>
    <location>
        <position position="175"/>
    </location>
</feature>
<feature type="sequence conflict" description="In Ref. 1; AAC36343." evidence="15" ref="1">
    <original>R</original>
    <variation>T</variation>
    <location>
        <position position="160"/>
    </location>
</feature>